<feature type="chain" id="PRO_1000138325" description="UPF0434 protein Rleg2_3773">
    <location>
        <begin position="1"/>
        <end position="62"/>
    </location>
</feature>
<protein>
    <recommendedName>
        <fullName evidence="1">UPF0434 protein Rleg2_3773</fullName>
    </recommendedName>
</protein>
<dbReference type="EMBL" id="CP001191">
    <property type="protein sequence ID" value="ACI57035.1"/>
    <property type="molecule type" value="Genomic_DNA"/>
</dbReference>
<dbReference type="RefSeq" id="WP_003589705.1">
    <property type="nucleotide sequence ID" value="NC_011369.1"/>
</dbReference>
<dbReference type="SMR" id="B5ZTJ9"/>
<dbReference type="STRING" id="395492.Rleg2_3773"/>
<dbReference type="KEGG" id="rlt:Rleg2_3773"/>
<dbReference type="eggNOG" id="COG2835">
    <property type="taxonomic scope" value="Bacteria"/>
</dbReference>
<dbReference type="HOGENOM" id="CLU_155659_2_2_5"/>
<dbReference type="Proteomes" id="UP000008330">
    <property type="component" value="Chromosome"/>
</dbReference>
<dbReference type="GO" id="GO:0005829">
    <property type="term" value="C:cytosol"/>
    <property type="evidence" value="ECO:0007669"/>
    <property type="project" value="TreeGrafter"/>
</dbReference>
<dbReference type="FunFam" id="2.20.25.10:FF:000002">
    <property type="entry name" value="UPF0434 protein YcaR"/>
    <property type="match status" value="1"/>
</dbReference>
<dbReference type="Gene3D" id="2.20.25.10">
    <property type="match status" value="1"/>
</dbReference>
<dbReference type="HAMAP" id="MF_01187">
    <property type="entry name" value="UPF0434"/>
    <property type="match status" value="1"/>
</dbReference>
<dbReference type="InterPro" id="IPR005651">
    <property type="entry name" value="Trm112-like"/>
</dbReference>
<dbReference type="PANTHER" id="PTHR33505:SF4">
    <property type="entry name" value="PROTEIN PREY, MITOCHONDRIAL"/>
    <property type="match status" value="1"/>
</dbReference>
<dbReference type="PANTHER" id="PTHR33505">
    <property type="entry name" value="ZGC:162634"/>
    <property type="match status" value="1"/>
</dbReference>
<dbReference type="Pfam" id="PF03966">
    <property type="entry name" value="Trm112p"/>
    <property type="match status" value="1"/>
</dbReference>
<dbReference type="SUPFAM" id="SSF158997">
    <property type="entry name" value="Trm112p-like"/>
    <property type="match status" value="1"/>
</dbReference>
<accession>B5ZTJ9</accession>
<keyword id="KW-1185">Reference proteome</keyword>
<name>Y3773_RHILW</name>
<evidence type="ECO:0000255" key="1">
    <source>
        <dbReference type="HAMAP-Rule" id="MF_01187"/>
    </source>
</evidence>
<sequence>MDEKLSRVDPKLLDLLVCPLSKGRLSYDREHNELVSEKARLAYPIRDGIPIMLVSEARRLDE</sequence>
<comment type="similarity">
    <text evidence="1">Belongs to the UPF0434 family.</text>
</comment>
<gene>
    <name type="ordered locus">Rleg2_3773</name>
</gene>
<proteinExistence type="inferred from homology"/>
<organism>
    <name type="scientific">Rhizobium leguminosarum bv. trifolii (strain WSM2304)</name>
    <dbReference type="NCBI Taxonomy" id="395492"/>
    <lineage>
        <taxon>Bacteria</taxon>
        <taxon>Pseudomonadati</taxon>
        <taxon>Pseudomonadota</taxon>
        <taxon>Alphaproteobacteria</taxon>
        <taxon>Hyphomicrobiales</taxon>
        <taxon>Rhizobiaceae</taxon>
        <taxon>Rhizobium/Agrobacterium group</taxon>
        <taxon>Rhizobium</taxon>
    </lineage>
</organism>
<reference key="1">
    <citation type="journal article" date="2010" name="Stand. Genomic Sci.">
        <title>Complete genome sequence of Rhizobium leguminosarum bv trifolii strain WSM2304, an effective microsymbiont of the South American clover Trifolium polymorphum.</title>
        <authorList>
            <person name="Reeve W."/>
            <person name="O'Hara G."/>
            <person name="Chain P."/>
            <person name="Ardley J."/>
            <person name="Brau L."/>
            <person name="Nandesena K."/>
            <person name="Tiwari R."/>
            <person name="Malfatti S."/>
            <person name="Kiss H."/>
            <person name="Lapidus A."/>
            <person name="Copeland A."/>
            <person name="Nolan M."/>
            <person name="Land M."/>
            <person name="Ivanova N."/>
            <person name="Mavromatis K."/>
            <person name="Markowitz V."/>
            <person name="Kyrpides N."/>
            <person name="Melino V."/>
            <person name="Denton M."/>
            <person name="Yates R."/>
            <person name="Howieson J."/>
        </authorList>
    </citation>
    <scope>NUCLEOTIDE SEQUENCE [LARGE SCALE GENOMIC DNA]</scope>
    <source>
        <strain>WSM2304</strain>
    </source>
</reference>